<sequence>MARRPKGRFIDGIVLLDKSTGMSSNFALQRVKRFFNANKAGHTGALDPLATGMLPVCLGEGTKFSQHLLDADKRYLVTAKLGERTDTSDSDGEVVQTRAIDFTEAQLLTALDFFRGETQQVPSMYSALKYQGQPLYKYAREGIEVPRESRPITVFELNFIGLEGDELTLDIHCSKGTYIRTIIDDLGEMLGCGAHVIMLRRTQVAQYPYARMVSLEQLEALVAQAHEQQIDPSVLLDPLLLPMDTAVADFPEVNVPDAIAPYLMQGQAVRVPVNADLKTDELVRITLGDIRRFVGIGTMNEDGLLAPKRLIVIHDEPAETD</sequence>
<reference key="1">
    <citation type="submission" date="2007-07" db="EMBL/GenBank/DDBJ databases">
        <title>Complete sequence of chromosome of Shewanella baltica OS185.</title>
        <authorList>
            <consortium name="US DOE Joint Genome Institute"/>
            <person name="Copeland A."/>
            <person name="Lucas S."/>
            <person name="Lapidus A."/>
            <person name="Barry K."/>
            <person name="Glavina del Rio T."/>
            <person name="Dalin E."/>
            <person name="Tice H."/>
            <person name="Pitluck S."/>
            <person name="Sims D."/>
            <person name="Brettin T."/>
            <person name="Bruce D."/>
            <person name="Detter J.C."/>
            <person name="Han C."/>
            <person name="Schmutz J."/>
            <person name="Larimer F."/>
            <person name="Land M."/>
            <person name="Hauser L."/>
            <person name="Kyrpides N."/>
            <person name="Mikhailova N."/>
            <person name="Brettar I."/>
            <person name="Rodrigues J."/>
            <person name="Konstantinidis K."/>
            <person name="Tiedje J."/>
            <person name="Richardson P."/>
        </authorList>
    </citation>
    <scope>NUCLEOTIDE SEQUENCE [LARGE SCALE GENOMIC DNA]</scope>
    <source>
        <strain>OS185</strain>
    </source>
</reference>
<feature type="chain" id="PRO_1000084671" description="tRNA pseudouridine synthase B">
    <location>
        <begin position="1"/>
        <end position="321"/>
    </location>
</feature>
<feature type="active site" description="Nucleophile" evidence="1">
    <location>
        <position position="47"/>
    </location>
</feature>
<proteinExistence type="inferred from homology"/>
<keyword id="KW-0413">Isomerase</keyword>
<keyword id="KW-0819">tRNA processing</keyword>
<gene>
    <name evidence="1" type="primary">truB</name>
    <name type="ordered locus">Shew185_3278</name>
</gene>
<name>TRUB_SHEB8</name>
<accession>A6WRG6</accession>
<protein>
    <recommendedName>
        <fullName evidence="1">tRNA pseudouridine synthase B</fullName>
        <ecNumber evidence="1">5.4.99.25</ecNumber>
    </recommendedName>
    <alternativeName>
        <fullName evidence="1">tRNA pseudouridine(55) synthase</fullName>
        <shortName evidence="1">Psi55 synthase</shortName>
    </alternativeName>
    <alternativeName>
        <fullName evidence="1">tRNA pseudouridylate synthase</fullName>
    </alternativeName>
    <alternativeName>
        <fullName evidence="1">tRNA-uridine isomerase</fullName>
    </alternativeName>
</protein>
<dbReference type="EC" id="5.4.99.25" evidence="1"/>
<dbReference type="EMBL" id="CP000753">
    <property type="protein sequence ID" value="ABS09405.1"/>
    <property type="molecule type" value="Genomic_DNA"/>
</dbReference>
<dbReference type="RefSeq" id="WP_006086939.1">
    <property type="nucleotide sequence ID" value="NC_009665.1"/>
</dbReference>
<dbReference type="SMR" id="A6WRG6"/>
<dbReference type="GeneID" id="11773457"/>
<dbReference type="KEGG" id="sbm:Shew185_3278"/>
<dbReference type="HOGENOM" id="CLU_032087_0_3_6"/>
<dbReference type="GO" id="GO:0003723">
    <property type="term" value="F:RNA binding"/>
    <property type="evidence" value="ECO:0007669"/>
    <property type="project" value="InterPro"/>
</dbReference>
<dbReference type="GO" id="GO:0160148">
    <property type="term" value="F:tRNA pseudouridine(55) synthase activity"/>
    <property type="evidence" value="ECO:0007669"/>
    <property type="project" value="UniProtKB-EC"/>
</dbReference>
<dbReference type="GO" id="GO:1990481">
    <property type="term" value="P:mRNA pseudouridine synthesis"/>
    <property type="evidence" value="ECO:0007669"/>
    <property type="project" value="TreeGrafter"/>
</dbReference>
<dbReference type="GO" id="GO:0031119">
    <property type="term" value="P:tRNA pseudouridine synthesis"/>
    <property type="evidence" value="ECO:0007669"/>
    <property type="project" value="UniProtKB-UniRule"/>
</dbReference>
<dbReference type="CDD" id="cd02573">
    <property type="entry name" value="PseudoU_synth_EcTruB"/>
    <property type="match status" value="1"/>
</dbReference>
<dbReference type="CDD" id="cd21152">
    <property type="entry name" value="PUA_TruB_bacterial"/>
    <property type="match status" value="1"/>
</dbReference>
<dbReference type="FunFam" id="3.30.2350.10:FF:000003">
    <property type="entry name" value="tRNA pseudouridine synthase B"/>
    <property type="match status" value="1"/>
</dbReference>
<dbReference type="Gene3D" id="3.30.2350.10">
    <property type="entry name" value="Pseudouridine synthase"/>
    <property type="match status" value="1"/>
</dbReference>
<dbReference type="Gene3D" id="2.30.130.10">
    <property type="entry name" value="PUA domain"/>
    <property type="match status" value="1"/>
</dbReference>
<dbReference type="HAMAP" id="MF_01080">
    <property type="entry name" value="TruB_bact"/>
    <property type="match status" value="1"/>
</dbReference>
<dbReference type="InterPro" id="IPR020103">
    <property type="entry name" value="PsdUridine_synth_cat_dom_sf"/>
</dbReference>
<dbReference type="InterPro" id="IPR002501">
    <property type="entry name" value="PsdUridine_synth_N"/>
</dbReference>
<dbReference type="InterPro" id="IPR015947">
    <property type="entry name" value="PUA-like_sf"/>
</dbReference>
<dbReference type="InterPro" id="IPR036974">
    <property type="entry name" value="PUA_sf"/>
</dbReference>
<dbReference type="InterPro" id="IPR014780">
    <property type="entry name" value="tRNA_psdUridine_synth_TruB"/>
</dbReference>
<dbReference type="InterPro" id="IPR015240">
    <property type="entry name" value="tRNA_sdUridine_synth_fam1_C"/>
</dbReference>
<dbReference type="InterPro" id="IPR032819">
    <property type="entry name" value="TruB_C"/>
</dbReference>
<dbReference type="NCBIfam" id="TIGR00431">
    <property type="entry name" value="TruB"/>
    <property type="match status" value="1"/>
</dbReference>
<dbReference type="PANTHER" id="PTHR13767:SF2">
    <property type="entry name" value="PSEUDOURIDYLATE SYNTHASE TRUB1"/>
    <property type="match status" value="1"/>
</dbReference>
<dbReference type="PANTHER" id="PTHR13767">
    <property type="entry name" value="TRNA-PSEUDOURIDINE SYNTHASE"/>
    <property type="match status" value="1"/>
</dbReference>
<dbReference type="Pfam" id="PF09157">
    <property type="entry name" value="TruB-C_2"/>
    <property type="match status" value="1"/>
</dbReference>
<dbReference type="Pfam" id="PF16198">
    <property type="entry name" value="TruB_C_2"/>
    <property type="match status" value="1"/>
</dbReference>
<dbReference type="Pfam" id="PF01509">
    <property type="entry name" value="TruB_N"/>
    <property type="match status" value="1"/>
</dbReference>
<dbReference type="SUPFAM" id="SSF55120">
    <property type="entry name" value="Pseudouridine synthase"/>
    <property type="match status" value="1"/>
</dbReference>
<dbReference type="SUPFAM" id="SSF88697">
    <property type="entry name" value="PUA domain-like"/>
    <property type="match status" value="1"/>
</dbReference>
<evidence type="ECO:0000255" key="1">
    <source>
        <dbReference type="HAMAP-Rule" id="MF_01080"/>
    </source>
</evidence>
<comment type="function">
    <text evidence="1">Responsible for synthesis of pseudouridine from uracil-55 in the psi GC loop of transfer RNAs.</text>
</comment>
<comment type="catalytic activity">
    <reaction evidence="1">
        <text>uridine(55) in tRNA = pseudouridine(55) in tRNA</text>
        <dbReference type="Rhea" id="RHEA:42532"/>
        <dbReference type="Rhea" id="RHEA-COMP:10101"/>
        <dbReference type="Rhea" id="RHEA-COMP:10102"/>
        <dbReference type="ChEBI" id="CHEBI:65314"/>
        <dbReference type="ChEBI" id="CHEBI:65315"/>
        <dbReference type="EC" id="5.4.99.25"/>
    </reaction>
</comment>
<comment type="similarity">
    <text evidence="1">Belongs to the pseudouridine synthase TruB family. Type 1 subfamily.</text>
</comment>
<organism>
    <name type="scientific">Shewanella baltica (strain OS185)</name>
    <dbReference type="NCBI Taxonomy" id="402882"/>
    <lineage>
        <taxon>Bacteria</taxon>
        <taxon>Pseudomonadati</taxon>
        <taxon>Pseudomonadota</taxon>
        <taxon>Gammaproteobacteria</taxon>
        <taxon>Alteromonadales</taxon>
        <taxon>Shewanellaceae</taxon>
        <taxon>Shewanella</taxon>
    </lineage>
</organism>